<dbReference type="EMBL" id="D63352">
    <property type="protein sequence ID" value="BAA09676.1"/>
    <property type="molecule type" value="mRNA"/>
</dbReference>
<dbReference type="RefSeq" id="NP_001271628.1">
    <property type="nucleotide sequence ID" value="NM_001284699.1"/>
</dbReference>
<dbReference type="SMR" id="Q29615"/>
<dbReference type="STRING" id="9541.ENSMFAP00000021866"/>
<dbReference type="GlyCosmos" id="Q29615">
    <property type="glycosylation" value="1 site, No reported glycans"/>
</dbReference>
<dbReference type="eggNOG" id="ENOG502RVR5">
    <property type="taxonomic scope" value="Eukaryota"/>
</dbReference>
<dbReference type="Proteomes" id="UP000233100">
    <property type="component" value="Unplaced"/>
</dbReference>
<dbReference type="GO" id="GO:0005615">
    <property type="term" value="C:extracellular space"/>
    <property type="evidence" value="ECO:0007669"/>
    <property type="project" value="UniProtKB-KW"/>
</dbReference>
<dbReference type="GO" id="GO:0005125">
    <property type="term" value="F:cytokine activity"/>
    <property type="evidence" value="ECO:0007669"/>
    <property type="project" value="UniProtKB-KW"/>
</dbReference>
<dbReference type="GO" id="GO:0008083">
    <property type="term" value="F:growth factor activity"/>
    <property type="evidence" value="ECO:0007669"/>
    <property type="project" value="UniProtKB-KW"/>
</dbReference>
<dbReference type="GO" id="GO:0005134">
    <property type="term" value="F:interleukin-2 receptor binding"/>
    <property type="evidence" value="ECO:0007669"/>
    <property type="project" value="InterPro"/>
</dbReference>
<dbReference type="GO" id="GO:0002250">
    <property type="term" value="P:adaptive immune response"/>
    <property type="evidence" value="ECO:0007669"/>
    <property type="project" value="UniProtKB-KW"/>
</dbReference>
<dbReference type="FunFam" id="1.20.1250.10:FF:000025">
    <property type="entry name" value="Interleukin-2"/>
    <property type="match status" value="1"/>
</dbReference>
<dbReference type="Gene3D" id="1.20.1250.10">
    <property type="match status" value="1"/>
</dbReference>
<dbReference type="InterPro" id="IPR009079">
    <property type="entry name" value="4_helix_cytokine-like_core"/>
</dbReference>
<dbReference type="InterPro" id="IPR000779">
    <property type="entry name" value="IL-2"/>
</dbReference>
<dbReference type="InterPro" id="IPR030477">
    <property type="entry name" value="IL-2_CS"/>
</dbReference>
<dbReference type="PANTHER" id="PTHR48487">
    <property type="entry name" value="INTERLEUKIN-2"/>
    <property type="match status" value="1"/>
</dbReference>
<dbReference type="PANTHER" id="PTHR48487:SF1">
    <property type="entry name" value="INTERLEUKIN-2"/>
    <property type="match status" value="1"/>
</dbReference>
<dbReference type="Pfam" id="PF00715">
    <property type="entry name" value="IL2"/>
    <property type="match status" value="1"/>
</dbReference>
<dbReference type="PRINTS" id="PR00265">
    <property type="entry name" value="INTERLEUKIN2"/>
</dbReference>
<dbReference type="SMART" id="SM00189">
    <property type="entry name" value="IL2"/>
    <property type="match status" value="1"/>
</dbReference>
<dbReference type="SUPFAM" id="SSF47266">
    <property type="entry name" value="4-helical cytokines"/>
    <property type="match status" value="1"/>
</dbReference>
<dbReference type="PROSITE" id="PS00424">
    <property type="entry name" value="INTERLEUKIN_2"/>
    <property type="match status" value="1"/>
</dbReference>
<name>IL2_MACFA</name>
<gene>
    <name type="primary">IL2</name>
</gene>
<organism>
    <name type="scientific">Macaca fascicularis</name>
    <name type="common">Crab-eating macaque</name>
    <name type="synonym">Cynomolgus monkey</name>
    <dbReference type="NCBI Taxonomy" id="9541"/>
    <lineage>
        <taxon>Eukaryota</taxon>
        <taxon>Metazoa</taxon>
        <taxon>Chordata</taxon>
        <taxon>Craniata</taxon>
        <taxon>Vertebrata</taxon>
        <taxon>Euteleostomi</taxon>
        <taxon>Mammalia</taxon>
        <taxon>Eutheria</taxon>
        <taxon>Euarchontoglires</taxon>
        <taxon>Primates</taxon>
        <taxon>Haplorrhini</taxon>
        <taxon>Catarrhini</taxon>
        <taxon>Cercopithecidae</taxon>
        <taxon>Cercopithecinae</taxon>
        <taxon>Macaca</taxon>
    </lineage>
</organism>
<evidence type="ECO:0000250" key="1"/>
<evidence type="ECO:0000250" key="2">
    <source>
        <dbReference type="UniProtKB" id="P60568"/>
    </source>
</evidence>
<evidence type="ECO:0000305" key="3"/>
<protein>
    <recommendedName>
        <fullName>Interleukin-2</fullName>
        <shortName>IL-2</shortName>
    </recommendedName>
    <alternativeName>
        <fullName>T-cell growth factor</fullName>
        <shortName>TCGF</shortName>
    </alternativeName>
</protein>
<keyword id="KW-1064">Adaptive immunity</keyword>
<keyword id="KW-0202">Cytokine</keyword>
<keyword id="KW-1015">Disulfide bond</keyword>
<keyword id="KW-0325">Glycoprotein</keyword>
<keyword id="KW-0339">Growth factor</keyword>
<keyword id="KW-0391">Immunity</keyword>
<keyword id="KW-1185">Reference proteome</keyword>
<keyword id="KW-0964">Secreted</keyword>
<keyword id="KW-0732">Signal</keyword>
<proteinExistence type="evidence at transcript level"/>
<reference key="1">
    <citation type="journal article" date="1997" name="Int. Arch. Allergy Immunol.">
        <title>Molecular cloning and expression of cynomolgus monkey interleukin-2 cDNA by the recombinant baculovirus system.</title>
        <authorList>
            <person name="Yabe M."/>
            <person name="Matsuura Y."/>
            <person name="Tatsumi M."/>
        </authorList>
    </citation>
    <scope>NUCLEOTIDE SEQUENCE [MRNA]</scope>
    <source>
        <tissue>Peripheral blood</tissue>
    </source>
</reference>
<sequence>MYRMQLLSCIALSLALVTNSAPTSSSTKKTQLQLEHLLLDLQMILNGINNYKNPKLTRMLTFKFYMPKKATELRHLQCLEEELKPLEEVLNLAQSKSFHLRDTKDLISNINVIVLELKGSETTLMCEYADETATIVEFLNRWITFCQSIISTLT</sequence>
<comment type="function">
    <text evidence="2">Cytokine produced by activated CD4-positive helper T-cells and to a lesser extend activated CD8-positive T-cells and natural killer (NK) cells that plays pivotal roles in the immune response and tolerance. Binds to a receptor complex composed of either the high-affinity trimeric IL-2R (IL2RA/CD25, IL2RB/CD122 and IL2RG/CD132) or the low-affinity dimeric IL-2R (IL2RB and IL2RG). Interaction with the receptor leads to oligomerization and conformation changes in the IL-2R subunits resulting in downstream signaling starting with phosphorylation of JAK1 and JAK3. In turn, JAK1 and JAK3 phosphorylate the receptor to form a docking site leading to the phosphorylation of several substrates including STAT5. This process leads to activation of several pathways including STAT, phosphoinositide-3-kinase/PI3K and mitogen-activated protein kinase/MAPK pathways. Functions as a T-cell growth factor and can increase NK-cell cytolytic activity as well. Promotes strong proliferation of activated B-cells and subsequently immunoglobulin production. Plays a pivotal role in regulating the adaptive immune system by controlling the survival and proliferation of regulatory T-cells, which are required for the maintenance of immune tolerance. Moreover, participates in the differentiation and homeostasis of effector T-cell subsets, including Th1, Th2, Th17 as well as memory CD8-positive T-cells.</text>
</comment>
<comment type="subcellular location">
    <subcellularLocation>
        <location>Secreted</location>
    </subcellularLocation>
</comment>
<comment type="similarity">
    <text evidence="3">Belongs to the IL-2 family.</text>
</comment>
<feature type="signal peptide" evidence="1">
    <location>
        <begin position="1"/>
        <end position="20"/>
    </location>
</feature>
<feature type="chain" id="PRO_0000015487" description="Interleukin-2">
    <location>
        <begin position="21"/>
        <end position="154"/>
    </location>
</feature>
<feature type="glycosylation site" description="O-linked (GalNAc...) threonine" evidence="1">
    <location>
        <position position="23"/>
    </location>
</feature>
<feature type="disulfide bond" evidence="1">
    <location>
        <begin position="78"/>
        <end position="126"/>
    </location>
</feature>
<accession>Q29615</accession>